<protein>
    <recommendedName>
        <fullName>Uncharacterized protein AF_0898</fullName>
    </recommendedName>
</protein>
<dbReference type="EMBL" id="AE000782">
    <property type="protein sequence ID" value="AAB90356.1"/>
    <property type="molecule type" value="Genomic_DNA"/>
</dbReference>
<dbReference type="PIR" id="B69362">
    <property type="entry name" value="B69362"/>
</dbReference>
<dbReference type="RefSeq" id="WP_010878398.1">
    <property type="nucleotide sequence ID" value="NC_000917.1"/>
</dbReference>
<dbReference type="PaxDb" id="224325-AF_0898"/>
<dbReference type="EnsemblBacteria" id="AAB90356">
    <property type="protein sequence ID" value="AAB90356"/>
    <property type="gene ID" value="AF_0898"/>
</dbReference>
<dbReference type="GeneID" id="43496663"/>
<dbReference type="KEGG" id="afu:AF_0898"/>
<dbReference type="eggNOG" id="arCOG13281">
    <property type="taxonomic scope" value="Archaea"/>
</dbReference>
<dbReference type="HOGENOM" id="CLU_3056916_0_0_2"/>
<dbReference type="OrthoDB" id="387426at2157"/>
<dbReference type="Proteomes" id="UP000002199">
    <property type="component" value="Chromosome"/>
</dbReference>
<proteinExistence type="predicted"/>
<accession>O29364</accession>
<gene>
    <name type="ordered locus">AF_0898</name>
</gene>
<reference key="1">
    <citation type="journal article" date="1997" name="Nature">
        <title>The complete genome sequence of the hyperthermophilic, sulphate-reducing archaeon Archaeoglobus fulgidus.</title>
        <authorList>
            <person name="Klenk H.-P."/>
            <person name="Clayton R.A."/>
            <person name="Tomb J.-F."/>
            <person name="White O."/>
            <person name="Nelson K.E."/>
            <person name="Ketchum K.A."/>
            <person name="Dodson R.J."/>
            <person name="Gwinn M.L."/>
            <person name="Hickey E.K."/>
            <person name="Peterson J.D."/>
            <person name="Richardson D.L."/>
            <person name="Kerlavage A.R."/>
            <person name="Graham D.E."/>
            <person name="Kyrpides N.C."/>
            <person name="Fleischmann R.D."/>
            <person name="Quackenbush J."/>
            <person name="Lee N.H."/>
            <person name="Sutton G.G."/>
            <person name="Gill S.R."/>
            <person name="Kirkness E.F."/>
            <person name="Dougherty B.A."/>
            <person name="McKenney K."/>
            <person name="Adams M.D."/>
            <person name="Loftus B.J."/>
            <person name="Peterson S.N."/>
            <person name="Reich C.I."/>
            <person name="McNeil L.K."/>
            <person name="Badger J.H."/>
            <person name="Glodek A."/>
            <person name="Zhou L."/>
            <person name="Overbeek R."/>
            <person name="Gocayne J.D."/>
            <person name="Weidman J.F."/>
            <person name="McDonald L.A."/>
            <person name="Utterback T.R."/>
            <person name="Cotton M.D."/>
            <person name="Spriggs T."/>
            <person name="Artiach P."/>
            <person name="Kaine B.P."/>
            <person name="Sykes S.M."/>
            <person name="Sadow P.W."/>
            <person name="D'Andrea K.P."/>
            <person name="Bowman C."/>
            <person name="Fujii C."/>
            <person name="Garland S.A."/>
            <person name="Mason T.M."/>
            <person name="Olsen G.J."/>
            <person name="Fraser C.M."/>
            <person name="Smith H.O."/>
            <person name="Woese C.R."/>
            <person name="Venter J.C."/>
        </authorList>
    </citation>
    <scope>NUCLEOTIDE SEQUENCE [LARGE SCALE GENOMIC DNA]</scope>
    <source>
        <strain>ATCC 49558 / DSM 4304 / JCM 9628 / NBRC 100126 / VC-16</strain>
    </source>
</reference>
<sequence>MIKAVIEEGLQSCTEPRSYEEGYVDADGNLVRYYEVQAPNYDDIRPPISQQEF</sequence>
<name>Y898_ARCFU</name>
<feature type="chain" id="PRO_0000127944" description="Uncharacterized protein AF_0898">
    <location>
        <begin position="1"/>
        <end position="53"/>
    </location>
</feature>
<keyword id="KW-1185">Reference proteome</keyword>
<organism>
    <name type="scientific">Archaeoglobus fulgidus (strain ATCC 49558 / DSM 4304 / JCM 9628 / NBRC 100126 / VC-16)</name>
    <dbReference type="NCBI Taxonomy" id="224325"/>
    <lineage>
        <taxon>Archaea</taxon>
        <taxon>Methanobacteriati</taxon>
        <taxon>Methanobacteriota</taxon>
        <taxon>Archaeoglobi</taxon>
        <taxon>Archaeoglobales</taxon>
        <taxon>Archaeoglobaceae</taxon>
        <taxon>Archaeoglobus</taxon>
    </lineage>
</organism>